<reference key="1">
    <citation type="journal article" date="1997" name="Nature">
        <title>The complete genome sequence of the Gram-positive bacterium Bacillus subtilis.</title>
        <authorList>
            <person name="Kunst F."/>
            <person name="Ogasawara N."/>
            <person name="Moszer I."/>
            <person name="Albertini A.M."/>
            <person name="Alloni G."/>
            <person name="Azevedo V."/>
            <person name="Bertero M.G."/>
            <person name="Bessieres P."/>
            <person name="Bolotin A."/>
            <person name="Borchert S."/>
            <person name="Borriss R."/>
            <person name="Boursier L."/>
            <person name="Brans A."/>
            <person name="Braun M."/>
            <person name="Brignell S.C."/>
            <person name="Bron S."/>
            <person name="Brouillet S."/>
            <person name="Bruschi C.V."/>
            <person name="Caldwell B."/>
            <person name="Capuano V."/>
            <person name="Carter N.M."/>
            <person name="Choi S.-K."/>
            <person name="Codani J.-J."/>
            <person name="Connerton I.F."/>
            <person name="Cummings N.J."/>
            <person name="Daniel R.A."/>
            <person name="Denizot F."/>
            <person name="Devine K.M."/>
            <person name="Duesterhoeft A."/>
            <person name="Ehrlich S.D."/>
            <person name="Emmerson P.T."/>
            <person name="Entian K.-D."/>
            <person name="Errington J."/>
            <person name="Fabret C."/>
            <person name="Ferrari E."/>
            <person name="Foulger D."/>
            <person name="Fritz C."/>
            <person name="Fujita M."/>
            <person name="Fujita Y."/>
            <person name="Fuma S."/>
            <person name="Galizzi A."/>
            <person name="Galleron N."/>
            <person name="Ghim S.-Y."/>
            <person name="Glaser P."/>
            <person name="Goffeau A."/>
            <person name="Golightly E.J."/>
            <person name="Grandi G."/>
            <person name="Guiseppi G."/>
            <person name="Guy B.J."/>
            <person name="Haga K."/>
            <person name="Haiech J."/>
            <person name="Harwood C.R."/>
            <person name="Henaut A."/>
            <person name="Hilbert H."/>
            <person name="Holsappel S."/>
            <person name="Hosono S."/>
            <person name="Hullo M.-F."/>
            <person name="Itaya M."/>
            <person name="Jones L.-M."/>
            <person name="Joris B."/>
            <person name="Karamata D."/>
            <person name="Kasahara Y."/>
            <person name="Klaerr-Blanchard M."/>
            <person name="Klein C."/>
            <person name="Kobayashi Y."/>
            <person name="Koetter P."/>
            <person name="Koningstein G."/>
            <person name="Krogh S."/>
            <person name="Kumano M."/>
            <person name="Kurita K."/>
            <person name="Lapidus A."/>
            <person name="Lardinois S."/>
            <person name="Lauber J."/>
            <person name="Lazarevic V."/>
            <person name="Lee S.-M."/>
            <person name="Levine A."/>
            <person name="Liu H."/>
            <person name="Masuda S."/>
            <person name="Mauel C."/>
            <person name="Medigue C."/>
            <person name="Medina N."/>
            <person name="Mellado R.P."/>
            <person name="Mizuno M."/>
            <person name="Moestl D."/>
            <person name="Nakai S."/>
            <person name="Noback M."/>
            <person name="Noone D."/>
            <person name="O'Reilly M."/>
            <person name="Ogawa K."/>
            <person name="Ogiwara A."/>
            <person name="Oudega B."/>
            <person name="Park S.-H."/>
            <person name="Parro V."/>
            <person name="Pohl T.M."/>
            <person name="Portetelle D."/>
            <person name="Porwollik S."/>
            <person name="Prescott A.M."/>
            <person name="Presecan E."/>
            <person name="Pujic P."/>
            <person name="Purnelle B."/>
            <person name="Rapoport G."/>
            <person name="Rey M."/>
            <person name="Reynolds S."/>
            <person name="Rieger M."/>
            <person name="Rivolta C."/>
            <person name="Rocha E."/>
            <person name="Roche B."/>
            <person name="Rose M."/>
            <person name="Sadaie Y."/>
            <person name="Sato T."/>
            <person name="Scanlan E."/>
            <person name="Schleich S."/>
            <person name="Schroeter R."/>
            <person name="Scoffone F."/>
            <person name="Sekiguchi J."/>
            <person name="Sekowska A."/>
            <person name="Seror S.J."/>
            <person name="Serror P."/>
            <person name="Shin B.-S."/>
            <person name="Soldo B."/>
            <person name="Sorokin A."/>
            <person name="Tacconi E."/>
            <person name="Takagi T."/>
            <person name="Takahashi H."/>
            <person name="Takemaru K."/>
            <person name="Takeuchi M."/>
            <person name="Tamakoshi A."/>
            <person name="Tanaka T."/>
            <person name="Terpstra P."/>
            <person name="Tognoni A."/>
            <person name="Tosato V."/>
            <person name="Uchiyama S."/>
            <person name="Vandenbol M."/>
            <person name="Vannier F."/>
            <person name="Vassarotti A."/>
            <person name="Viari A."/>
            <person name="Wambutt R."/>
            <person name="Wedler E."/>
            <person name="Wedler H."/>
            <person name="Weitzenegger T."/>
            <person name="Winters P."/>
            <person name="Wipat A."/>
            <person name="Yamamoto H."/>
            <person name="Yamane K."/>
            <person name="Yasumoto K."/>
            <person name="Yata K."/>
            <person name="Yoshida K."/>
            <person name="Yoshikawa H.-F."/>
            <person name="Zumstein E."/>
            <person name="Yoshikawa H."/>
            <person name="Danchin A."/>
        </authorList>
    </citation>
    <scope>NUCLEOTIDE SEQUENCE [LARGE SCALE GENOMIC DNA]</scope>
    <source>
        <strain>168</strain>
    </source>
</reference>
<dbReference type="EC" id="3.4.11.1"/>
<dbReference type="EC" id="3.4.11.10"/>
<dbReference type="EMBL" id="AL009126">
    <property type="protein sequence ID" value="CAB15195.1"/>
    <property type="molecule type" value="Genomic_DNA"/>
</dbReference>
<dbReference type="PIR" id="F70012">
    <property type="entry name" value="F70012"/>
</dbReference>
<dbReference type="RefSeq" id="NP_391085.1">
    <property type="nucleotide sequence ID" value="NC_000964.3"/>
</dbReference>
<dbReference type="RefSeq" id="WP_003228733.1">
    <property type="nucleotide sequence ID" value="NZ_OZ025638.1"/>
</dbReference>
<dbReference type="SMR" id="O32106"/>
<dbReference type="FunCoup" id="O32106">
    <property type="interactions" value="426"/>
</dbReference>
<dbReference type="STRING" id="224308.BSU32050"/>
<dbReference type="MEROPS" id="M17.010"/>
<dbReference type="jPOST" id="O32106"/>
<dbReference type="PaxDb" id="224308-BSU32050"/>
<dbReference type="EnsemblBacteria" id="CAB15195">
    <property type="protein sequence ID" value="CAB15195"/>
    <property type="gene ID" value="BSU_32050"/>
</dbReference>
<dbReference type="GeneID" id="936587"/>
<dbReference type="KEGG" id="bsu:BSU32050"/>
<dbReference type="PATRIC" id="fig|224308.179.peg.3471"/>
<dbReference type="eggNOG" id="COG0260">
    <property type="taxonomic scope" value="Bacteria"/>
</dbReference>
<dbReference type="InParanoid" id="O32106"/>
<dbReference type="OrthoDB" id="9809354at2"/>
<dbReference type="PhylomeDB" id="O32106"/>
<dbReference type="BioCyc" id="BSUB:BSU32050-MONOMER"/>
<dbReference type="BRENDA" id="3.4.11.1">
    <property type="organism ID" value="658"/>
</dbReference>
<dbReference type="BRENDA" id="3.4.11.10">
    <property type="organism ID" value="658"/>
</dbReference>
<dbReference type="Proteomes" id="UP000001570">
    <property type="component" value="Chromosome"/>
</dbReference>
<dbReference type="GO" id="GO:0005737">
    <property type="term" value="C:cytoplasm"/>
    <property type="evidence" value="ECO:0000318"/>
    <property type="project" value="GO_Central"/>
</dbReference>
<dbReference type="GO" id="GO:0030145">
    <property type="term" value="F:manganese ion binding"/>
    <property type="evidence" value="ECO:0007669"/>
    <property type="project" value="UniProtKB-UniRule"/>
</dbReference>
<dbReference type="GO" id="GO:0070006">
    <property type="term" value="F:metalloaminopeptidase activity"/>
    <property type="evidence" value="ECO:0007669"/>
    <property type="project" value="InterPro"/>
</dbReference>
<dbReference type="GO" id="GO:0008233">
    <property type="term" value="F:peptidase activity"/>
    <property type="evidence" value="ECO:0000318"/>
    <property type="project" value="GO_Central"/>
</dbReference>
<dbReference type="GO" id="GO:0006508">
    <property type="term" value="P:proteolysis"/>
    <property type="evidence" value="ECO:0000318"/>
    <property type="project" value="GO_Central"/>
</dbReference>
<dbReference type="CDD" id="cd00433">
    <property type="entry name" value="Peptidase_M17"/>
    <property type="match status" value="1"/>
</dbReference>
<dbReference type="Gene3D" id="3.40.220.10">
    <property type="entry name" value="Leucine Aminopeptidase, subunit E, domain 1"/>
    <property type="match status" value="1"/>
</dbReference>
<dbReference type="Gene3D" id="3.40.630.10">
    <property type="entry name" value="Zn peptidases"/>
    <property type="match status" value="1"/>
</dbReference>
<dbReference type="HAMAP" id="MF_00181">
    <property type="entry name" value="Cytosol_peptidase_M17"/>
    <property type="match status" value="1"/>
</dbReference>
<dbReference type="InterPro" id="IPR011356">
    <property type="entry name" value="Leucine_aapep/pepB"/>
</dbReference>
<dbReference type="InterPro" id="IPR043472">
    <property type="entry name" value="Macro_dom-like"/>
</dbReference>
<dbReference type="InterPro" id="IPR000819">
    <property type="entry name" value="Peptidase_M17_C"/>
</dbReference>
<dbReference type="InterPro" id="IPR023042">
    <property type="entry name" value="Peptidase_M17_leu_NH2_pept"/>
</dbReference>
<dbReference type="InterPro" id="IPR008283">
    <property type="entry name" value="Peptidase_M17_N"/>
</dbReference>
<dbReference type="NCBIfam" id="NF002073">
    <property type="entry name" value="PRK00913.1-2"/>
    <property type="match status" value="1"/>
</dbReference>
<dbReference type="NCBIfam" id="NF002074">
    <property type="entry name" value="PRK00913.1-4"/>
    <property type="match status" value="1"/>
</dbReference>
<dbReference type="NCBIfam" id="NF002083">
    <property type="entry name" value="PRK00913.3-5"/>
    <property type="match status" value="1"/>
</dbReference>
<dbReference type="PANTHER" id="PTHR11963:SF23">
    <property type="entry name" value="CYTOSOL AMINOPEPTIDASE"/>
    <property type="match status" value="1"/>
</dbReference>
<dbReference type="PANTHER" id="PTHR11963">
    <property type="entry name" value="LEUCINE AMINOPEPTIDASE-RELATED"/>
    <property type="match status" value="1"/>
</dbReference>
<dbReference type="Pfam" id="PF00883">
    <property type="entry name" value="Peptidase_M17"/>
    <property type="match status" value="1"/>
</dbReference>
<dbReference type="Pfam" id="PF02789">
    <property type="entry name" value="Peptidase_M17_N"/>
    <property type="match status" value="1"/>
</dbReference>
<dbReference type="PRINTS" id="PR00481">
    <property type="entry name" value="LAMNOPPTDASE"/>
</dbReference>
<dbReference type="SUPFAM" id="SSF52949">
    <property type="entry name" value="Macro domain-like"/>
    <property type="match status" value="1"/>
</dbReference>
<dbReference type="SUPFAM" id="SSF53187">
    <property type="entry name" value="Zn-dependent exopeptidases"/>
    <property type="match status" value="1"/>
</dbReference>
<dbReference type="PROSITE" id="PS00631">
    <property type="entry name" value="CYTOSOL_AP"/>
    <property type="match status" value="1"/>
</dbReference>
<comment type="function">
    <text evidence="1">Presumably involved in the processing and regular turnover of intracellular proteins. Catalyzes the removal of unsubstituted N-terminal amino acids from various peptides (By similarity).</text>
</comment>
<comment type="catalytic activity">
    <reaction>
        <text>Release of an N-terminal amino acid, Xaa-|-Yaa-, in which Xaa is preferably Leu, but may be other amino acids including Pro although not Arg or Lys, and Yaa may be Pro. Amino acid amides and methyl esters are also readily hydrolyzed, but rates on arylamides are exceedingly low.</text>
        <dbReference type="EC" id="3.4.11.1"/>
    </reaction>
</comment>
<comment type="catalytic activity">
    <reaction>
        <text>Release of an N-terminal amino acid, preferentially leucine, but not glutamic or aspartic acids.</text>
        <dbReference type="EC" id="3.4.11.10"/>
    </reaction>
</comment>
<comment type="cofactor">
    <cofactor evidence="1">
        <name>Mn(2+)</name>
        <dbReference type="ChEBI" id="CHEBI:29035"/>
    </cofactor>
    <text evidence="1">Binds 2 manganese ions per subunit.</text>
</comment>
<comment type="subcellular location">
    <subcellularLocation>
        <location evidence="1">Cytoplasm</location>
    </subcellularLocation>
</comment>
<comment type="similarity">
    <text evidence="3">Belongs to the peptidase M17 family.</text>
</comment>
<organism>
    <name type="scientific">Bacillus subtilis (strain 168)</name>
    <dbReference type="NCBI Taxonomy" id="224308"/>
    <lineage>
        <taxon>Bacteria</taxon>
        <taxon>Bacillati</taxon>
        <taxon>Bacillota</taxon>
        <taxon>Bacilli</taxon>
        <taxon>Bacillales</taxon>
        <taxon>Bacillaceae</taxon>
        <taxon>Bacillus</taxon>
    </lineage>
</organism>
<gene>
    <name type="primary">pepA</name>
    <name type="synonym">yuiE</name>
    <name type="ordered locus">BSU32050</name>
</gene>
<keyword id="KW-0031">Aminopeptidase</keyword>
<keyword id="KW-0963">Cytoplasm</keyword>
<keyword id="KW-0378">Hydrolase</keyword>
<keyword id="KW-0464">Manganese</keyword>
<keyword id="KW-0479">Metal-binding</keyword>
<keyword id="KW-0645">Protease</keyword>
<keyword id="KW-1185">Reference proteome</keyword>
<evidence type="ECO:0000250" key="1"/>
<evidence type="ECO:0000255" key="2"/>
<evidence type="ECO:0000305" key="3"/>
<feature type="chain" id="PRO_0000165722" description="Probable cytosol aminopeptidase">
    <location>
        <begin position="1"/>
        <end position="500"/>
    </location>
</feature>
<feature type="active site" evidence="2">
    <location>
        <position position="273"/>
    </location>
</feature>
<feature type="active site" evidence="2">
    <location>
        <position position="347"/>
    </location>
</feature>
<feature type="binding site" evidence="1">
    <location>
        <position position="261"/>
    </location>
    <ligand>
        <name>Mn(2+)</name>
        <dbReference type="ChEBI" id="CHEBI:29035"/>
        <label>2</label>
    </ligand>
</feature>
<feature type="binding site" evidence="1">
    <location>
        <position position="266"/>
    </location>
    <ligand>
        <name>Mn(2+)</name>
        <dbReference type="ChEBI" id="CHEBI:29035"/>
        <label>1</label>
    </ligand>
</feature>
<feature type="binding site" evidence="1">
    <location>
        <position position="266"/>
    </location>
    <ligand>
        <name>Mn(2+)</name>
        <dbReference type="ChEBI" id="CHEBI:29035"/>
        <label>2</label>
    </ligand>
</feature>
<feature type="binding site" evidence="1">
    <location>
        <position position="284"/>
    </location>
    <ligand>
        <name>Mn(2+)</name>
        <dbReference type="ChEBI" id="CHEBI:29035"/>
        <label>2</label>
    </ligand>
</feature>
<feature type="binding site" evidence="1">
    <location>
        <position position="343"/>
    </location>
    <ligand>
        <name>Mn(2+)</name>
        <dbReference type="ChEBI" id="CHEBI:29035"/>
        <label>1</label>
    </ligand>
</feature>
<feature type="binding site" evidence="1">
    <location>
        <position position="345"/>
    </location>
    <ligand>
        <name>Mn(2+)</name>
        <dbReference type="ChEBI" id="CHEBI:29035"/>
        <label>1</label>
    </ligand>
</feature>
<feature type="binding site" evidence="1">
    <location>
        <position position="345"/>
    </location>
    <ligand>
        <name>Mn(2+)</name>
        <dbReference type="ChEBI" id="CHEBI:29035"/>
        <label>2</label>
    </ligand>
</feature>
<sequence>MFYAVQQSEHTETLVVGLFQKSQLTGKALEIDEMLEGHLTQLLKEGDVSAKPNQVSKVFPPSSAGMKRIYFVGLGREANYSFEQAKERFAHVFQAIHKDRKQETAVLLDTFISEDVPPADAAHALAESCLLASYEVQDYKHKSNEPDKQIEAVYVVTDEDTQEVQAGLRVGQAYGQGTNSARTLVNMPGNMLTATDLASYAEELAAKYDFECEILEKSEMEELGMGGILAVNQGSTEPPKMIVLKYQGKKEWEDVVGLVGKGITFDTGGYSIKTKSGIVGMKSDMGGAAAVLGAMETIGELRPEQNVLCVIPSTDNMISGGAMKPDDVIVSLSGKTIEILNTDAEGRLVLADGITYAKQHGASVLVDVATLTGGVVVALGTETTGAMTNDQSFYQQVADAAQECGEAIWQLPITEKDKKRVKSSQMADLSNSPGREGHAIMAGTFLGEFAESTPWVHLDIAGTATANKATCFGPAGATGVMARTLATLAERFTLEEDKNE</sequence>
<name>AMPA_BACSU</name>
<accession>O32106</accession>
<proteinExistence type="inferred from homology"/>
<protein>
    <recommendedName>
        <fullName>Probable cytosol aminopeptidase</fullName>
        <ecNumber>3.4.11.1</ecNumber>
    </recommendedName>
    <alternativeName>
        <fullName>Leucine aminopeptidase</fullName>
        <shortName>LAP</shortName>
        <ecNumber>3.4.11.10</ecNumber>
    </alternativeName>
    <alternativeName>
        <fullName>Leucyl aminopeptidase</fullName>
    </alternativeName>
</protein>